<organism>
    <name type="scientific">Methanocaldococcus jannaschii (strain ATCC 43067 / DSM 2661 / JAL-1 / JCM 10045 / NBRC 100440)</name>
    <name type="common">Methanococcus jannaschii</name>
    <dbReference type="NCBI Taxonomy" id="243232"/>
    <lineage>
        <taxon>Archaea</taxon>
        <taxon>Methanobacteriati</taxon>
        <taxon>Methanobacteriota</taxon>
        <taxon>Methanomada group</taxon>
        <taxon>Methanococci</taxon>
        <taxon>Methanococcales</taxon>
        <taxon>Methanocaldococcaceae</taxon>
        <taxon>Methanocaldococcus</taxon>
    </lineage>
</organism>
<dbReference type="EMBL" id="L77117">
    <property type="protein sequence ID" value="AAB98838.1"/>
    <property type="molecule type" value="Genomic_DNA"/>
</dbReference>
<dbReference type="PIR" id="C64404">
    <property type="entry name" value="C64404"/>
</dbReference>
<dbReference type="RefSeq" id="WP_010870347.1">
    <property type="nucleotide sequence ID" value="NC_000909.1"/>
</dbReference>
<dbReference type="SMR" id="Q58245"/>
<dbReference type="STRING" id="243232.MJ_0835"/>
<dbReference type="PaxDb" id="243232-MJ_0835"/>
<dbReference type="EnsemblBacteria" id="AAB98838">
    <property type="protein sequence ID" value="AAB98838"/>
    <property type="gene ID" value="MJ_0835"/>
</dbReference>
<dbReference type="GeneID" id="1451719"/>
<dbReference type="KEGG" id="mja:MJ_0835"/>
<dbReference type="eggNOG" id="arCOG03421">
    <property type="taxonomic scope" value="Archaea"/>
</dbReference>
<dbReference type="HOGENOM" id="CLU_732836_0_0_2"/>
<dbReference type="InParanoid" id="Q58245"/>
<dbReference type="OrthoDB" id="65991at2157"/>
<dbReference type="Proteomes" id="UP000000805">
    <property type="component" value="Chromosome"/>
</dbReference>
<dbReference type="GO" id="GO:0005886">
    <property type="term" value="C:plasma membrane"/>
    <property type="evidence" value="ECO:0007669"/>
    <property type="project" value="UniProtKB-SubCell"/>
</dbReference>
<dbReference type="InterPro" id="IPR007509">
    <property type="entry name" value="DUF515"/>
</dbReference>
<dbReference type="Pfam" id="PF04415">
    <property type="entry name" value="DUF515"/>
    <property type="match status" value="2"/>
</dbReference>
<evidence type="ECO:0000255" key="1"/>
<evidence type="ECO:0000305" key="2"/>
<comment type="subcellular location">
    <subcellularLocation>
        <location evidence="2">Cell membrane</location>
        <topology evidence="2">Multi-pass membrane protein</topology>
    </subcellularLocation>
</comment>
<keyword id="KW-1003">Cell membrane</keyword>
<keyword id="KW-0472">Membrane</keyword>
<keyword id="KW-1185">Reference proteome</keyword>
<keyword id="KW-0812">Transmembrane</keyword>
<keyword id="KW-1133">Transmembrane helix</keyword>
<name>Y835_METJA</name>
<protein>
    <recommendedName>
        <fullName>Uncharacterized protein MJ0835</fullName>
    </recommendedName>
</protein>
<accession>Q58245</accession>
<gene>
    <name type="ordered locus">MJ0835</name>
</gene>
<proteinExistence type="predicted"/>
<feature type="chain" id="PRO_0000107070" description="Uncharacterized protein MJ0835">
    <location>
        <begin position="1"/>
        <end position="377"/>
    </location>
</feature>
<feature type="transmembrane region" description="Helical" evidence="1">
    <location>
        <begin position="23"/>
        <end position="43"/>
    </location>
</feature>
<feature type="transmembrane region" description="Helical" evidence="1">
    <location>
        <begin position="251"/>
        <end position="271"/>
    </location>
</feature>
<reference key="1">
    <citation type="journal article" date="1996" name="Science">
        <title>Complete genome sequence of the methanogenic archaeon, Methanococcus jannaschii.</title>
        <authorList>
            <person name="Bult C.J."/>
            <person name="White O."/>
            <person name="Olsen G.J."/>
            <person name="Zhou L."/>
            <person name="Fleischmann R.D."/>
            <person name="Sutton G.G."/>
            <person name="Blake J.A."/>
            <person name="FitzGerald L.M."/>
            <person name="Clayton R.A."/>
            <person name="Gocayne J.D."/>
            <person name="Kerlavage A.R."/>
            <person name="Dougherty B.A."/>
            <person name="Tomb J.-F."/>
            <person name="Adams M.D."/>
            <person name="Reich C.I."/>
            <person name="Overbeek R."/>
            <person name="Kirkness E.F."/>
            <person name="Weinstock K.G."/>
            <person name="Merrick J.M."/>
            <person name="Glodek A."/>
            <person name="Scott J.L."/>
            <person name="Geoghagen N.S.M."/>
            <person name="Weidman J.F."/>
            <person name="Fuhrmann J.L."/>
            <person name="Nguyen D."/>
            <person name="Utterback T.R."/>
            <person name="Kelley J.M."/>
            <person name="Peterson J.D."/>
            <person name="Sadow P.W."/>
            <person name="Hanna M.C."/>
            <person name="Cotton M.D."/>
            <person name="Roberts K.M."/>
            <person name="Hurst M.A."/>
            <person name="Kaine B.P."/>
            <person name="Borodovsky M."/>
            <person name="Klenk H.-P."/>
            <person name="Fraser C.M."/>
            <person name="Smith H.O."/>
            <person name="Woese C.R."/>
            <person name="Venter J.C."/>
        </authorList>
    </citation>
    <scope>NUCLEOTIDE SEQUENCE [LARGE SCALE GENOMIC DNA]</scope>
    <source>
        <strain>ATCC 43067 / DSM 2661 / JAL-1 / JCM 10045 / NBRC 100440</strain>
    </source>
</reference>
<sequence length="377" mass="42951">MVDTSKIKALKEKSRRTVKSGSLKFILIILVVVIVGLLAFIAYNEISNLQFQEKITLENQKKAAIESINQMFAKYPNDPQKLIYINKIQMANNIEEINEVLEEAKKYISFKNYKIEAINQIKSMYGEYYSLSLSAQELVHKISLAQSTEEIENLLKSVDIEKDIRSIIEKQIDYVLASGDKYYYVEINGKSMFMTRDEILKYKKFWTLSELKSLKITPVSQLNKVAIEISAKQCGKLPHKGDIISIYSKDGSFITYGIIDSSYVILSSISYSESKSTSSNINELGESYSSSSSSSISYSLNNLPGILHATVIDRLDYDKIKKMFGEYGKKLNEIEDDTQIFDENVNYFLIISIPDDKIPDIIQIDPKDIVIVIKSKE</sequence>